<organism>
    <name type="scientific">Drosophila melanogaster</name>
    <name type="common">Fruit fly</name>
    <dbReference type="NCBI Taxonomy" id="7227"/>
    <lineage>
        <taxon>Eukaryota</taxon>
        <taxon>Metazoa</taxon>
        <taxon>Ecdysozoa</taxon>
        <taxon>Arthropoda</taxon>
        <taxon>Hexapoda</taxon>
        <taxon>Insecta</taxon>
        <taxon>Pterygota</taxon>
        <taxon>Neoptera</taxon>
        <taxon>Endopterygota</taxon>
        <taxon>Diptera</taxon>
        <taxon>Brachycera</taxon>
        <taxon>Muscomorpha</taxon>
        <taxon>Ephydroidea</taxon>
        <taxon>Drosophilidae</taxon>
        <taxon>Drosophila</taxon>
        <taxon>Sophophora</taxon>
    </lineage>
</organism>
<accession>Q9VBP9</accession>
<accession>C9QPJ1</accession>
<accession>E1JIX5</accession>
<accession>H8F4R9</accession>
<accession>Q8IMS6</accession>
<accession>Q95U63</accession>
<sequence length="652" mass="73361">MACAPLLLEQFIYKKRNFAYAFVRHRLFVLCKQSLIRVQSAEGIKRIEISPKSNLKHLYDSVQNALKVDGFGLFKERNFLTELQASGSQLVGTSLRHGDMVYLKQMAGTSSRRTSTTVLDSQAFKTSTISNPNSARPSFNVIEDDVDQALSKADGTIKRERDSKLCHHNANGRCVHCSALEPYDESYLKEHNIKHLSFHSYIRKQTSGMDQGKYFVFDDINCRIKPGCREHPPWPKGICSKCQPSAITLNRQTYRHVDNVMFENTKIVERFLNYWRTTGHQRMGYLYGTYEQHTDVPLGIRAKVAAIYEPPQESTRDSINIQPDEFADDVDAVASALGLKKIGWIFTDLITDDASIGTVKQIRGIESHFITAQECITAGELQNRHPNPCKYASNGVFGSKFVTICVTGDKTKQVHMEGYAVSAQCMALVRDNCLIPTKDAPELGYVRESTDKQYVPDVFYKEKDLYGNEVQRLARPLPVEYLLVDVPASTPLQPIYTFTEYDKRQPFPIENRYIDGHLQDFNALSCYLSAWGEEEFLEAISDFHLLVYLYKMDMLPLRQHMGPLLEAVRTKNPNQAAQFKVVDVWKLLESLIQASSGGSGGTTSYPSGGASASAGASGSEAMDLDANTWTCNHCTFINRGELTSCEICSLPR</sequence>
<proteinExistence type="evidence at protein level"/>
<protein>
    <recommendedName>
        <fullName>Nuclear protein localization protein 4 homolog</fullName>
    </recommendedName>
</protein>
<keyword id="KW-0002">3D-structure</keyword>
<keyword id="KW-0025">Alternative splicing</keyword>
<keyword id="KW-0479">Metal-binding</keyword>
<keyword id="KW-0597">Phosphoprotein</keyword>
<keyword id="KW-1185">Reference proteome</keyword>
<keyword id="KW-0833">Ubl conjugation pathway</keyword>
<keyword id="KW-0862">Zinc</keyword>
<keyword id="KW-0863">Zinc-finger</keyword>
<feature type="chain" id="PRO_0000372853" description="Nuclear protein localization protein 4 homolog">
    <location>
        <begin position="1"/>
        <end position="652"/>
    </location>
</feature>
<feature type="domain" description="MPN" evidence="3">
    <location>
        <begin position="260"/>
        <end position="397"/>
    </location>
</feature>
<feature type="zinc finger region" description="RanBP2-type" evidence="2">
    <location>
        <begin position="625"/>
        <end position="652"/>
    </location>
</feature>
<feature type="modified residue" description="Phosphothreonine" evidence="5">
    <location>
        <position position="114"/>
    </location>
</feature>
<feature type="modified residue" description="Phosphoserine" evidence="4 5">
    <location>
        <position position="115"/>
    </location>
</feature>
<feature type="modified residue" description="Phosphothreonine" evidence="5">
    <location>
        <position position="117"/>
    </location>
</feature>
<feature type="modified residue" description="Phosphoserine" evidence="4">
    <location>
        <position position="138"/>
    </location>
</feature>
<feature type="splice variant" id="VSP_037209" description="In isoform B." evidence="7">
    <original>MACAPLLLEQFIYKKRNFAYAFVRHRLFVLCKQS</original>
    <variation>MPNDKI</variation>
    <location>
        <begin position="1"/>
        <end position="34"/>
    </location>
</feature>
<feature type="sequence conflict" description="In Ref. 3; ACX70078." evidence="8" ref="3">
    <original>L</original>
    <variation>R</variation>
    <location>
        <position position="465"/>
    </location>
</feature>
<feature type="strand" evidence="9">
    <location>
        <begin position="35"/>
        <end position="40"/>
    </location>
</feature>
<feature type="strand" evidence="9">
    <location>
        <begin position="43"/>
        <end position="49"/>
    </location>
</feature>
<feature type="helix" evidence="9">
    <location>
        <begin position="55"/>
        <end position="65"/>
    </location>
</feature>
<feature type="strand" evidence="9">
    <location>
        <begin position="72"/>
        <end position="76"/>
    </location>
</feature>
<feature type="strand" evidence="9">
    <location>
        <begin position="87"/>
        <end position="90"/>
    </location>
</feature>
<feature type="helix" evidence="9">
    <location>
        <begin position="91"/>
        <end position="94"/>
    </location>
</feature>
<feature type="strand" evidence="9">
    <location>
        <begin position="100"/>
        <end position="104"/>
    </location>
</feature>
<gene>
    <name type="primary">Npl4</name>
    <name type="ORF">CG4673</name>
</gene>
<evidence type="ECO:0000250" key="1"/>
<evidence type="ECO:0000255" key="2">
    <source>
        <dbReference type="PROSITE-ProRule" id="PRU00322"/>
    </source>
</evidence>
<evidence type="ECO:0000255" key="3">
    <source>
        <dbReference type="PROSITE-ProRule" id="PRU01182"/>
    </source>
</evidence>
<evidence type="ECO:0000269" key="4">
    <source>
    </source>
</evidence>
<evidence type="ECO:0000269" key="5">
    <source>
    </source>
</evidence>
<evidence type="ECO:0000269" key="6">
    <source>
    </source>
</evidence>
<evidence type="ECO:0000303" key="7">
    <source ref="3"/>
</evidence>
<evidence type="ECO:0000305" key="8"/>
<evidence type="ECO:0007829" key="9">
    <source>
        <dbReference type="PDB" id="4RV0"/>
    </source>
</evidence>
<reference key="1">
    <citation type="journal article" date="2000" name="Science">
        <title>The genome sequence of Drosophila melanogaster.</title>
        <authorList>
            <person name="Adams M.D."/>
            <person name="Celniker S.E."/>
            <person name="Holt R.A."/>
            <person name="Evans C.A."/>
            <person name="Gocayne J.D."/>
            <person name="Amanatides P.G."/>
            <person name="Scherer S.E."/>
            <person name="Li P.W."/>
            <person name="Hoskins R.A."/>
            <person name="Galle R.F."/>
            <person name="George R.A."/>
            <person name="Lewis S.E."/>
            <person name="Richards S."/>
            <person name="Ashburner M."/>
            <person name="Henderson S.N."/>
            <person name="Sutton G.G."/>
            <person name="Wortman J.R."/>
            <person name="Yandell M.D."/>
            <person name="Zhang Q."/>
            <person name="Chen L.X."/>
            <person name="Brandon R.C."/>
            <person name="Rogers Y.-H.C."/>
            <person name="Blazej R.G."/>
            <person name="Champe M."/>
            <person name="Pfeiffer B.D."/>
            <person name="Wan K.H."/>
            <person name="Doyle C."/>
            <person name="Baxter E.G."/>
            <person name="Helt G."/>
            <person name="Nelson C.R."/>
            <person name="Miklos G.L.G."/>
            <person name="Abril J.F."/>
            <person name="Agbayani A."/>
            <person name="An H.-J."/>
            <person name="Andrews-Pfannkoch C."/>
            <person name="Baldwin D."/>
            <person name="Ballew R.M."/>
            <person name="Basu A."/>
            <person name="Baxendale J."/>
            <person name="Bayraktaroglu L."/>
            <person name="Beasley E.M."/>
            <person name="Beeson K.Y."/>
            <person name="Benos P.V."/>
            <person name="Berman B.P."/>
            <person name="Bhandari D."/>
            <person name="Bolshakov S."/>
            <person name="Borkova D."/>
            <person name="Botchan M.R."/>
            <person name="Bouck J."/>
            <person name="Brokstein P."/>
            <person name="Brottier P."/>
            <person name="Burtis K.C."/>
            <person name="Busam D.A."/>
            <person name="Butler H."/>
            <person name="Cadieu E."/>
            <person name="Center A."/>
            <person name="Chandra I."/>
            <person name="Cherry J.M."/>
            <person name="Cawley S."/>
            <person name="Dahlke C."/>
            <person name="Davenport L.B."/>
            <person name="Davies P."/>
            <person name="de Pablos B."/>
            <person name="Delcher A."/>
            <person name="Deng Z."/>
            <person name="Mays A.D."/>
            <person name="Dew I."/>
            <person name="Dietz S.M."/>
            <person name="Dodson K."/>
            <person name="Doup L.E."/>
            <person name="Downes M."/>
            <person name="Dugan-Rocha S."/>
            <person name="Dunkov B.C."/>
            <person name="Dunn P."/>
            <person name="Durbin K.J."/>
            <person name="Evangelista C.C."/>
            <person name="Ferraz C."/>
            <person name="Ferriera S."/>
            <person name="Fleischmann W."/>
            <person name="Fosler C."/>
            <person name="Gabrielian A.E."/>
            <person name="Garg N.S."/>
            <person name="Gelbart W.M."/>
            <person name="Glasser K."/>
            <person name="Glodek A."/>
            <person name="Gong F."/>
            <person name="Gorrell J.H."/>
            <person name="Gu Z."/>
            <person name="Guan P."/>
            <person name="Harris M."/>
            <person name="Harris N.L."/>
            <person name="Harvey D.A."/>
            <person name="Heiman T.J."/>
            <person name="Hernandez J.R."/>
            <person name="Houck J."/>
            <person name="Hostin D."/>
            <person name="Houston K.A."/>
            <person name="Howland T.J."/>
            <person name="Wei M.-H."/>
            <person name="Ibegwam C."/>
            <person name="Jalali M."/>
            <person name="Kalush F."/>
            <person name="Karpen G.H."/>
            <person name="Ke Z."/>
            <person name="Kennison J.A."/>
            <person name="Ketchum K.A."/>
            <person name="Kimmel B.E."/>
            <person name="Kodira C.D."/>
            <person name="Kraft C.L."/>
            <person name="Kravitz S."/>
            <person name="Kulp D."/>
            <person name="Lai Z."/>
            <person name="Lasko P."/>
            <person name="Lei Y."/>
            <person name="Levitsky A.A."/>
            <person name="Li J.H."/>
            <person name="Li Z."/>
            <person name="Liang Y."/>
            <person name="Lin X."/>
            <person name="Liu X."/>
            <person name="Mattei B."/>
            <person name="McIntosh T.C."/>
            <person name="McLeod M.P."/>
            <person name="McPherson D."/>
            <person name="Merkulov G."/>
            <person name="Milshina N.V."/>
            <person name="Mobarry C."/>
            <person name="Morris J."/>
            <person name="Moshrefi A."/>
            <person name="Mount S.M."/>
            <person name="Moy M."/>
            <person name="Murphy B."/>
            <person name="Murphy L."/>
            <person name="Muzny D.M."/>
            <person name="Nelson D.L."/>
            <person name="Nelson D.R."/>
            <person name="Nelson K.A."/>
            <person name="Nixon K."/>
            <person name="Nusskern D.R."/>
            <person name="Pacleb J.M."/>
            <person name="Palazzolo M."/>
            <person name="Pittman G.S."/>
            <person name="Pan S."/>
            <person name="Pollard J."/>
            <person name="Puri V."/>
            <person name="Reese M.G."/>
            <person name="Reinert K."/>
            <person name="Remington K."/>
            <person name="Saunders R.D.C."/>
            <person name="Scheeler F."/>
            <person name="Shen H."/>
            <person name="Shue B.C."/>
            <person name="Siden-Kiamos I."/>
            <person name="Simpson M."/>
            <person name="Skupski M.P."/>
            <person name="Smith T.J."/>
            <person name="Spier E."/>
            <person name="Spradling A.C."/>
            <person name="Stapleton M."/>
            <person name="Strong R."/>
            <person name="Sun E."/>
            <person name="Svirskas R."/>
            <person name="Tector C."/>
            <person name="Turner R."/>
            <person name="Venter E."/>
            <person name="Wang A.H."/>
            <person name="Wang X."/>
            <person name="Wang Z.-Y."/>
            <person name="Wassarman D.A."/>
            <person name="Weinstock G.M."/>
            <person name="Weissenbach J."/>
            <person name="Williams S.M."/>
            <person name="Woodage T."/>
            <person name="Worley K.C."/>
            <person name="Wu D."/>
            <person name="Yang S."/>
            <person name="Yao Q.A."/>
            <person name="Ye J."/>
            <person name="Yeh R.-F."/>
            <person name="Zaveri J.S."/>
            <person name="Zhan M."/>
            <person name="Zhang G."/>
            <person name="Zhao Q."/>
            <person name="Zheng L."/>
            <person name="Zheng X.H."/>
            <person name="Zhong F.N."/>
            <person name="Zhong W."/>
            <person name="Zhou X."/>
            <person name="Zhu S.C."/>
            <person name="Zhu X."/>
            <person name="Smith H.O."/>
            <person name="Gibbs R.A."/>
            <person name="Myers E.W."/>
            <person name="Rubin G.M."/>
            <person name="Venter J.C."/>
        </authorList>
    </citation>
    <scope>NUCLEOTIDE SEQUENCE [LARGE SCALE GENOMIC DNA]</scope>
    <source>
        <strain>Berkeley</strain>
    </source>
</reference>
<reference key="2">
    <citation type="journal article" date="2002" name="Genome Biol.">
        <title>Annotation of the Drosophila melanogaster euchromatic genome: a systematic review.</title>
        <authorList>
            <person name="Misra S."/>
            <person name="Crosby M.A."/>
            <person name="Mungall C.J."/>
            <person name="Matthews B.B."/>
            <person name="Campbell K.S."/>
            <person name="Hradecky P."/>
            <person name="Huang Y."/>
            <person name="Kaminker J.S."/>
            <person name="Millburn G.H."/>
            <person name="Prochnik S.E."/>
            <person name="Smith C.D."/>
            <person name="Tupy J.L."/>
            <person name="Whitfield E.J."/>
            <person name="Bayraktaroglu L."/>
            <person name="Berman B.P."/>
            <person name="Bettencourt B.R."/>
            <person name="Celniker S.E."/>
            <person name="de Grey A.D.N.J."/>
            <person name="Drysdale R.A."/>
            <person name="Harris N.L."/>
            <person name="Richter J."/>
            <person name="Russo S."/>
            <person name="Schroeder A.J."/>
            <person name="Shu S.Q."/>
            <person name="Stapleton M."/>
            <person name="Yamada C."/>
            <person name="Ashburner M."/>
            <person name="Gelbart W.M."/>
            <person name="Rubin G.M."/>
            <person name="Lewis S.E."/>
        </authorList>
    </citation>
    <scope>GENOME REANNOTATION</scope>
    <scope>ALTERNATIVE SPLICING</scope>
    <source>
        <strain>Berkeley</strain>
    </source>
</reference>
<reference key="3">
    <citation type="submission" date="2012-03" db="EMBL/GenBank/DDBJ databases">
        <authorList>
            <person name="Stapleton M."/>
            <person name="Booth B."/>
            <person name="Carlson J.W."/>
            <person name="Frise E."/>
            <person name="Kapadia B."/>
            <person name="Park S."/>
            <person name="Wan K.H."/>
            <person name="Yu C."/>
            <person name="Celniker S.E."/>
        </authorList>
    </citation>
    <scope>NUCLEOTIDE SEQUENCE [LARGE SCALE MRNA] (ISOFORMS A AND B)</scope>
    <source>
        <strain>Berkeley</strain>
        <tissue>Head</tissue>
    </source>
</reference>
<reference key="4">
    <citation type="journal article" date="2005" name="Mol. Cell. Biol.">
        <title>Identification and characterization of a Drosophila proteasome regulatory network.</title>
        <authorList>
            <person name="Lundgren J."/>
            <person name="Masson P."/>
            <person name="Mirzaei Z."/>
            <person name="Young P."/>
        </authorList>
    </citation>
    <scope>IDENTIFICATION</scope>
</reference>
<reference key="5">
    <citation type="journal article" date="2007" name="Mol. Biosyst.">
        <title>An integrated chemical, mass spectrometric and computational strategy for (quantitative) phosphoproteomics: application to Drosophila melanogaster Kc167 cells.</title>
        <authorList>
            <person name="Bodenmiller B."/>
            <person name="Mueller L.N."/>
            <person name="Pedrioli P.G.A."/>
            <person name="Pflieger D."/>
            <person name="Juenger M.A."/>
            <person name="Eng J.K."/>
            <person name="Aebersold R."/>
            <person name="Tao W.A."/>
        </authorList>
    </citation>
    <scope>PHOSPHORYLATION [LARGE SCALE ANALYSIS] AT SER-115 AND SER-138</scope>
    <scope>IDENTIFICATION BY MASS SPECTROMETRY</scope>
</reference>
<reference key="6">
    <citation type="journal article" date="2008" name="J. Proteome Res.">
        <title>Phosphoproteome analysis of Drosophila melanogaster embryos.</title>
        <authorList>
            <person name="Zhai B."/>
            <person name="Villen J."/>
            <person name="Beausoleil S.A."/>
            <person name="Mintseris J."/>
            <person name="Gygi S.P."/>
        </authorList>
    </citation>
    <scope>PHOSPHORYLATION [LARGE SCALE ANALYSIS] AT THR-114; SER-115 AND THR-117</scope>
    <scope>IDENTIFICATION BY MASS SPECTROMETRY</scope>
    <source>
        <tissue>Embryo</tissue>
    </source>
</reference>
<reference key="7">
    <citation type="journal article" date="2015" name="EMBO J.">
        <title>A non-canonical role of the p97 complex in RIG-I antiviral signaling.</title>
        <authorList>
            <person name="Hao Q."/>
            <person name="Jiao S."/>
            <person name="Shi Z."/>
            <person name="Li C."/>
            <person name="Meng X."/>
            <person name="Zhang Z."/>
            <person name="Wang Y."/>
            <person name="Song X."/>
            <person name="Wang W."/>
            <person name="Zhang R."/>
            <person name="Zhao Y."/>
            <person name="Wong C.C."/>
            <person name="Zhou Z."/>
        </authorList>
    </citation>
    <scope>X-RAY CRYSTALLOGRAPHY (2.00 ANGSTROMS) OF 35-105 IN COMPLEX WITH TER94</scope>
    <scope>INTERACTION WITH TER94</scope>
</reference>
<name>NPL4_DROME</name>
<dbReference type="EMBL" id="AE014297">
    <property type="protein sequence ID" value="AAF56480.3"/>
    <property type="molecule type" value="Genomic_DNA"/>
</dbReference>
<dbReference type="EMBL" id="AE014297">
    <property type="protein sequence ID" value="AAN14058.2"/>
    <property type="molecule type" value="Genomic_DNA"/>
</dbReference>
<dbReference type="EMBL" id="AE014297">
    <property type="protein sequence ID" value="ACZ95025.1"/>
    <property type="molecule type" value="Genomic_DNA"/>
</dbReference>
<dbReference type="EMBL" id="AY058286">
    <property type="protein sequence ID" value="AAL13515.1"/>
    <property type="molecule type" value="mRNA"/>
</dbReference>
<dbReference type="EMBL" id="BT100105">
    <property type="protein sequence ID" value="ACX70078.1"/>
    <property type="status" value="ALT_INIT"/>
    <property type="molecule type" value="mRNA"/>
</dbReference>
<dbReference type="EMBL" id="BT133309">
    <property type="protein sequence ID" value="AFD10756.1"/>
    <property type="status" value="ALT_INIT"/>
    <property type="molecule type" value="mRNA"/>
</dbReference>
<dbReference type="RefSeq" id="NP_001163731.1">
    <molecule id="Q9VBP9-2"/>
    <property type="nucleotide sequence ID" value="NM_001170260.2"/>
</dbReference>
<dbReference type="RefSeq" id="NP_651407.3">
    <molecule id="Q9VBP9-1"/>
    <property type="nucleotide sequence ID" value="NM_143150.4"/>
</dbReference>
<dbReference type="RefSeq" id="NP_733110.2">
    <molecule id="Q9VBP9-2"/>
    <property type="nucleotide sequence ID" value="NM_170231.3"/>
</dbReference>
<dbReference type="PDB" id="4RV0">
    <property type="method" value="X-ray"/>
    <property type="resolution" value="2.00 A"/>
    <property type="chains" value="B/D/F/H=35-105"/>
</dbReference>
<dbReference type="PDBsum" id="4RV0"/>
<dbReference type="SMR" id="Q9VBP9"/>
<dbReference type="BioGRID" id="68004">
    <property type="interactions" value="27"/>
</dbReference>
<dbReference type="FunCoup" id="Q9VBP9">
    <property type="interactions" value="2864"/>
</dbReference>
<dbReference type="IntAct" id="Q9VBP9">
    <property type="interactions" value="22"/>
</dbReference>
<dbReference type="STRING" id="7227.FBpp0084267"/>
<dbReference type="iPTMnet" id="Q9VBP9"/>
<dbReference type="PaxDb" id="7227-FBpp0084267"/>
<dbReference type="DNASU" id="43091"/>
<dbReference type="EnsemblMetazoa" id="FBtr0084892">
    <molecule id="Q9VBP9-2"/>
    <property type="protein sequence ID" value="FBpp0084266"/>
    <property type="gene ID" value="FBgn0039348"/>
</dbReference>
<dbReference type="EnsemblMetazoa" id="FBtr0084893">
    <molecule id="Q9VBP9-1"/>
    <property type="protein sequence ID" value="FBpp0084267"/>
    <property type="gene ID" value="FBgn0039348"/>
</dbReference>
<dbReference type="EnsemblMetazoa" id="FBtr0300730">
    <molecule id="Q9VBP9-2"/>
    <property type="protein sequence ID" value="FBpp0289954"/>
    <property type="gene ID" value="FBgn0039348"/>
</dbReference>
<dbReference type="GeneID" id="43091"/>
<dbReference type="KEGG" id="dme:Dmel_CG4673"/>
<dbReference type="UCSC" id="CG4673-RA">
    <molecule id="Q9VBP9-1"/>
    <property type="organism name" value="d. melanogaster"/>
</dbReference>
<dbReference type="UCSC" id="CG4673-RB">
    <property type="organism name" value="d. melanogaster"/>
</dbReference>
<dbReference type="AGR" id="FB:FBgn0039348"/>
<dbReference type="CTD" id="43091"/>
<dbReference type="FlyBase" id="FBgn0039348">
    <property type="gene designation" value="Npl4"/>
</dbReference>
<dbReference type="VEuPathDB" id="VectorBase:FBgn0039348"/>
<dbReference type="eggNOG" id="KOG2834">
    <property type="taxonomic scope" value="Eukaryota"/>
</dbReference>
<dbReference type="GeneTree" id="ENSGT00390000018731"/>
<dbReference type="InParanoid" id="Q9VBP9"/>
<dbReference type="OMA" id="KWSRTGR"/>
<dbReference type="OrthoDB" id="10251089at2759"/>
<dbReference type="PhylomeDB" id="Q9VBP9"/>
<dbReference type="Reactome" id="R-DME-110320">
    <property type="pathway name" value="Translesion Synthesis by POLH"/>
</dbReference>
<dbReference type="Reactome" id="R-DME-8951664">
    <property type="pathway name" value="Neddylation"/>
</dbReference>
<dbReference type="Reactome" id="R-DME-9755511">
    <property type="pathway name" value="KEAP1-NFE2L2 pathway"/>
</dbReference>
<dbReference type="SignaLink" id="Q9VBP9"/>
<dbReference type="UniPathway" id="UPA00144"/>
<dbReference type="BioGRID-ORCS" id="43091">
    <property type="hits" value="1 hit in 1 CRISPR screen"/>
</dbReference>
<dbReference type="EvolutionaryTrace" id="Q9VBP9"/>
<dbReference type="GenomeRNAi" id="43091"/>
<dbReference type="PRO" id="PR:Q9VBP9"/>
<dbReference type="Proteomes" id="UP000000803">
    <property type="component" value="Chromosome 3R"/>
</dbReference>
<dbReference type="Bgee" id="FBgn0039348">
    <property type="expression patterns" value="Expressed in indirect flight muscle cell (Drosophila) in body wall and 158 other cell types or tissues"/>
</dbReference>
<dbReference type="GO" id="GO:0005829">
    <property type="term" value="C:cytosol"/>
    <property type="evidence" value="ECO:0007005"/>
    <property type="project" value="FlyBase"/>
</dbReference>
<dbReference type="GO" id="GO:0005654">
    <property type="term" value="C:nucleoplasm"/>
    <property type="evidence" value="ECO:0007005"/>
    <property type="project" value="FlyBase"/>
</dbReference>
<dbReference type="GO" id="GO:0005634">
    <property type="term" value="C:nucleus"/>
    <property type="evidence" value="ECO:0000318"/>
    <property type="project" value="GO_Central"/>
</dbReference>
<dbReference type="GO" id="GO:0071795">
    <property type="term" value="F:K11-linked polyubiquitin modification-dependent protein binding"/>
    <property type="evidence" value="ECO:0000314"/>
    <property type="project" value="FlyBase"/>
</dbReference>
<dbReference type="GO" id="GO:0043130">
    <property type="term" value="F:ubiquitin binding"/>
    <property type="evidence" value="ECO:0000318"/>
    <property type="project" value="GO_Central"/>
</dbReference>
<dbReference type="GO" id="GO:0031625">
    <property type="term" value="F:ubiquitin protein ligase binding"/>
    <property type="evidence" value="ECO:0000318"/>
    <property type="project" value="GO_Central"/>
</dbReference>
<dbReference type="GO" id="GO:0008270">
    <property type="term" value="F:zinc ion binding"/>
    <property type="evidence" value="ECO:0007669"/>
    <property type="project" value="UniProtKB-KW"/>
</dbReference>
<dbReference type="GO" id="GO:0098586">
    <property type="term" value="P:cellular response to virus"/>
    <property type="evidence" value="ECO:0000315"/>
    <property type="project" value="FlyBase"/>
</dbReference>
<dbReference type="GO" id="GO:0045879">
    <property type="term" value="P:negative regulation of smoothened signaling pathway"/>
    <property type="evidence" value="ECO:0000315"/>
    <property type="project" value="FlyBase"/>
</dbReference>
<dbReference type="GO" id="GO:0043161">
    <property type="term" value="P:proteasome-mediated ubiquitin-dependent protein catabolic process"/>
    <property type="evidence" value="ECO:0007669"/>
    <property type="project" value="UniProtKB-UniPathway"/>
</dbReference>
<dbReference type="GO" id="GO:0006511">
    <property type="term" value="P:ubiquitin-dependent protein catabolic process"/>
    <property type="evidence" value="ECO:0000315"/>
    <property type="project" value="FlyBase"/>
</dbReference>
<dbReference type="CDD" id="cd08061">
    <property type="entry name" value="MPN_NPL4"/>
    <property type="match status" value="1"/>
</dbReference>
<dbReference type="FunFam" id="3.10.20.90:FF:000323">
    <property type="entry name" value="Nuclear protein localization protein 4 homolog"/>
    <property type="match status" value="1"/>
</dbReference>
<dbReference type="FunFam" id="3.40.140.10:FF:000012">
    <property type="entry name" value="nuclear protein localization protein 4 homolog"/>
    <property type="match status" value="1"/>
</dbReference>
<dbReference type="Gene3D" id="3.40.140.10">
    <property type="entry name" value="Cytidine Deaminase, domain 2"/>
    <property type="match status" value="1"/>
</dbReference>
<dbReference type="Gene3D" id="3.10.20.90">
    <property type="entry name" value="Phosphatidylinositol 3-kinase Catalytic Subunit, Chain A, domain 1"/>
    <property type="match status" value="1"/>
</dbReference>
<dbReference type="Gene3D" id="2.30.30.380">
    <property type="entry name" value="Zn-finger domain of Sec23/24"/>
    <property type="match status" value="1"/>
</dbReference>
<dbReference type="InterPro" id="IPR037518">
    <property type="entry name" value="MPN"/>
</dbReference>
<dbReference type="InterPro" id="IPR016563">
    <property type="entry name" value="Npl4"/>
</dbReference>
<dbReference type="InterPro" id="IPR007717">
    <property type="entry name" value="NPL4_C"/>
</dbReference>
<dbReference type="InterPro" id="IPR024682">
    <property type="entry name" value="Npl4_Ub-like_dom"/>
</dbReference>
<dbReference type="InterPro" id="IPR007716">
    <property type="entry name" value="NPL4_Zn-bd_put"/>
</dbReference>
<dbReference type="InterPro" id="IPR029071">
    <property type="entry name" value="Ubiquitin-like_domsf"/>
</dbReference>
<dbReference type="InterPro" id="IPR001876">
    <property type="entry name" value="Znf_RanBP2"/>
</dbReference>
<dbReference type="InterPro" id="IPR036443">
    <property type="entry name" value="Znf_RanBP2_sf"/>
</dbReference>
<dbReference type="PANTHER" id="PTHR12710">
    <property type="entry name" value="NUCLEAR PROTEIN LOCALIZATION 4"/>
    <property type="match status" value="1"/>
</dbReference>
<dbReference type="PANTHER" id="PTHR12710:SF0">
    <property type="entry name" value="NUCLEAR PROTEIN LOCALIZATION PROTEIN 4 HOMOLOG"/>
    <property type="match status" value="1"/>
</dbReference>
<dbReference type="Pfam" id="PF05021">
    <property type="entry name" value="NPL4"/>
    <property type="match status" value="1"/>
</dbReference>
<dbReference type="Pfam" id="PF11543">
    <property type="entry name" value="UN_NPL4"/>
    <property type="match status" value="1"/>
</dbReference>
<dbReference type="Pfam" id="PF05020">
    <property type="entry name" value="zf-NPL4"/>
    <property type="match status" value="1"/>
</dbReference>
<dbReference type="PIRSF" id="PIRSF010052">
    <property type="entry name" value="Polyub_prc_Npl4"/>
    <property type="match status" value="1"/>
</dbReference>
<dbReference type="SMART" id="SM00547">
    <property type="entry name" value="ZnF_RBZ"/>
    <property type="match status" value="1"/>
</dbReference>
<dbReference type="SUPFAM" id="SSF90209">
    <property type="entry name" value="Ran binding protein zinc finger-like"/>
    <property type="match status" value="1"/>
</dbReference>
<dbReference type="SUPFAM" id="SSF54236">
    <property type="entry name" value="Ubiquitin-like"/>
    <property type="match status" value="1"/>
</dbReference>
<dbReference type="PROSITE" id="PS50249">
    <property type="entry name" value="MPN"/>
    <property type="match status" value="1"/>
</dbReference>
<dbReference type="PROSITE" id="PS01358">
    <property type="entry name" value="ZF_RANBP2_1"/>
    <property type="match status" value="1"/>
</dbReference>
<dbReference type="PROSITE" id="PS50199">
    <property type="entry name" value="ZF_RANBP2_2"/>
    <property type="match status" value="1"/>
</dbReference>
<comment type="function">
    <text evidence="1">May be part of a complex that binds ubiquitinated proteins and that is necessary for the export of misfolded proteins from the ER to the cytoplasm, where they are degraded by the proteasome.</text>
</comment>
<comment type="pathway">
    <text>Protein degradation; proteasomal ubiquitin-dependent pathway.</text>
</comment>
<comment type="subunit">
    <text evidence="6">Interacts with TER94.</text>
</comment>
<comment type="interaction">
    <interactant intactId="EBI-89642">
        <id>Q9VBP9</id>
    </interactant>
    <interactant intactId="EBI-142983">
        <id>Q9VTF9</id>
        <label>Ufd1</label>
    </interactant>
    <organismsDiffer>false</organismsDiffer>
    <experiments>2</experiments>
</comment>
<comment type="alternative products">
    <event type="alternative splicing"/>
    <isoform>
        <id>Q9VBP9-1</id>
        <name>A</name>
        <sequence type="displayed"/>
    </isoform>
    <isoform>
        <id>Q9VBP9-2</id>
        <name>B</name>
        <name>D</name>
        <sequence type="described" ref="VSP_037209"/>
    </isoform>
</comment>
<comment type="similarity">
    <text evidence="8">Belongs to the NPL4 family.</text>
</comment>
<comment type="sequence caution" evidence="8">
    <conflict type="erroneous initiation">
        <sequence resource="EMBL-CDS" id="ACX70078"/>
    </conflict>
    <text>Extended N-terminus.</text>
</comment>
<comment type="sequence caution" evidence="8">
    <conflict type="erroneous initiation">
        <sequence resource="EMBL-CDS" id="AFD10756"/>
    </conflict>
    <text>Extended N-terminus.</text>
</comment>